<dbReference type="EC" id="4.4.1.21" evidence="1"/>
<dbReference type="EMBL" id="CP001095">
    <property type="protein sequence ID" value="ACJ53067.1"/>
    <property type="molecule type" value="Genomic_DNA"/>
</dbReference>
<dbReference type="EMBL" id="AP010889">
    <property type="protein sequence ID" value="BAJ69653.1"/>
    <property type="molecule type" value="Genomic_DNA"/>
</dbReference>
<dbReference type="RefSeq" id="WP_012578273.1">
    <property type="nucleotide sequence ID" value="NC_011593.1"/>
</dbReference>
<dbReference type="SMR" id="B7GUC1"/>
<dbReference type="KEGG" id="bln:Blon_2000"/>
<dbReference type="KEGG" id="blon:BLIJ_2075"/>
<dbReference type="PATRIC" id="fig|391904.8.peg.2081"/>
<dbReference type="HOGENOM" id="CLU_107531_2_1_11"/>
<dbReference type="Proteomes" id="UP000001360">
    <property type="component" value="Chromosome"/>
</dbReference>
<dbReference type="GO" id="GO:0005506">
    <property type="term" value="F:iron ion binding"/>
    <property type="evidence" value="ECO:0007669"/>
    <property type="project" value="InterPro"/>
</dbReference>
<dbReference type="GO" id="GO:0043768">
    <property type="term" value="F:S-ribosylhomocysteine lyase activity"/>
    <property type="evidence" value="ECO:0007669"/>
    <property type="project" value="UniProtKB-UniRule"/>
</dbReference>
<dbReference type="GO" id="GO:0009372">
    <property type="term" value="P:quorum sensing"/>
    <property type="evidence" value="ECO:0007669"/>
    <property type="project" value="UniProtKB-UniRule"/>
</dbReference>
<dbReference type="Gene3D" id="3.30.1360.80">
    <property type="entry name" value="S-ribosylhomocysteinase (LuxS)"/>
    <property type="match status" value="1"/>
</dbReference>
<dbReference type="HAMAP" id="MF_00091">
    <property type="entry name" value="LuxS"/>
    <property type="match status" value="1"/>
</dbReference>
<dbReference type="InterPro" id="IPR037005">
    <property type="entry name" value="LuxS_sf"/>
</dbReference>
<dbReference type="InterPro" id="IPR011249">
    <property type="entry name" value="Metalloenz_LuxS/M16"/>
</dbReference>
<dbReference type="InterPro" id="IPR003815">
    <property type="entry name" value="S-ribosylhomocysteinase"/>
</dbReference>
<dbReference type="NCBIfam" id="NF002605">
    <property type="entry name" value="PRK02260.2-3"/>
    <property type="match status" value="1"/>
</dbReference>
<dbReference type="NCBIfam" id="NF002608">
    <property type="entry name" value="PRK02260.3-1"/>
    <property type="match status" value="1"/>
</dbReference>
<dbReference type="PANTHER" id="PTHR35799">
    <property type="entry name" value="S-RIBOSYLHOMOCYSTEINE LYASE"/>
    <property type="match status" value="1"/>
</dbReference>
<dbReference type="PANTHER" id="PTHR35799:SF1">
    <property type="entry name" value="S-RIBOSYLHOMOCYSTEINE LYASE"/>
    <property type="match status" value="1"/>
</dbReference>
<dbReference type="Pfam" id="PF02664">
    <property type="entry name" value="LuxS"/>
    <property type="match status" value="1"/>
</dbReference>
<dbReference type="PIRSF" id="PIRSF006160">
    <property type="entry name" value="AI2"/>
    <property type="match status" value="1"/>
</dbReference>
<dbReference type="PRINTS" id="PR01487">
    <property type="entry name" value="LUXSPROTEIN"/>
</dbReference>
<dbReference type="SUPFAM" id="SSF63411">
    <property type="entry name" value="LuxS/MPP-like metallohydrolase"/>
    <property type="match status" value="1"/>
</dbReference>
<accession>B7GUC1</accession>
<accession>E8MM76</accession>
<evidence type="ECO:0000255" key="1">
    <source>
        <dbReference type="HAMAP-Rule" id="MF_00091"/>
    </source>
</evidence>
<organism>
    <name type="scientific">Bifidobacterium longum subsp. infantis (strain ATCC 15697 / DSM 20088 / JCM 1222 / NCTC 11817 / S12)</name>
    <dbReference type="NCBI Taxonomy" id="391904"/>
    <lineage>
        <taxon>Bacteria</taxon>
        <taxon>Bacillati</taxon>
        <taxon>Actinomycetota</taxon>
        <taxon>Actinomycetes</taxon>
        <taxon>Bifidobacteriales</taxon>
        <taxon>Bifidobacteriaceae</taxon>
        <taxon>Bifidobacterium</taxon>
    </lineage>
</organism>
<name>LUXS_BIFLS</name>
<reference key="1">
    <citation type="journal article" date="2008" name="Proc. Natl. Acad. Sci. U.S.A.">
        <title>The genome sequence of Bifidobacterium longum subsp. infantis reveals adaptations for milk utilization within the infant microbiome.</title>
        <authorList>
            <person name="Sela D.A."/>
            <person name="Chapman J."/>
            <person name="Adeuya A."/>
            <person name="Kim J.H."/>
            <person name="Chen F."/>
            <person name="Whitehead T.R."/>
            <person name="Lapidus A."/>
            <person name="Rokhsar D.S."/>
            <person name="Lebrilla C.B."/>
            <person name="German J.B."/>
            <person name="Price N.P."/>
            <person name="Richardson P.M."/>
            <person name="Mills D.A."/>
        </authorList>
    </citation>
    <scope>NUCLEOTIDE SEQUENCE [LARGE SCALE GENOMIC DNA]</scope>
    <source>
        <strain>ATCC 15697 / DSM 20088 / JCM 1222 / NCTC 11817 / S12</strain>
    </source>
</reference>
<reference key="2">
    <citation type="journal article" date="2011" name="Nature">
        <title>Bifidobacteria can protect from enteropathogenic infection through production of acetate.</title>
        <authorList>
            <person name="Fukuda S."/>
            <person name="Toh H."/>
            <person name="Hase K."/>
            <person name="Oshima K."/>
            <person name="Nakanishi Y."/>
            <person name="Yoshimura K."/>
            <person name="Tobe T."/>
            <person name="Clarke J.M."/>
            <person name="Topping D.L."/>
            <person name="Suzuki T."/>
            <person name="Taylor T.D."/>
            <person name="Itoh K."/>
            <person name="Kikuchi J."/>
            <person name="Morita H."/>
            <person name="Hattori M."/>
            <person name="Ohno H."/>
        </authorList>
    </citation>
    <scope>NUCLEOTIDE SEQUENCE [LARGE SCALE GENOMIC DNA]</scope>
    <source>
        <strain>ATCC 15697 / DSM 20088 / JCM 1222 / NCTC 11817 / S12</strain>
    </source>
</reference>
<comment type="function">
    <text evidence="1">Involved in the synthesis of autoinducer 2 (AI-2) which is secreted by bacteria and is used to communicate both the cell density and the metabolic potential of the environment. The regulation of gene expression in response to changes in cell density is called quorum sensing. Catalyzes the transformation of S-ribosylhomocysteine (RHC) to homocysteine (HC) and 4,5-dihydroxy-2,3-pentadione (DPD).</text>
</comment>
<comment type="catalytic activity">
    <reaction evidence="1">
        <text>S-(5-deoxy-D-ribos-5-yl)-L-homocysteine = (S)-4,5-dihydroxypentane-2,3-dione + L-homocysteine</text>
        <dbReference type="Rhea" id="RHEA:17753"/>
        <dbReference type="ChEBI" id="CHEBI:29484"/>
        <dbReference type="ChEBI" id="CHEBI:58195"/>
        <dbReference type="ChEBI" id="CHEBI:58199"/>
        <dbReference type="EC" id="4.4.1.21"/>
    </reaction>
</comment>
<comment type="cofactor">
    <cofactor evidence="1">
        <name>Fe cation</name>
        <dbReference type="ChEBI" id="CHEBI:24875"/>
    </cofactor>
    <text evidence="1">Binds 1 Fe cation per subunit.</text>
</comment>
<comment type="subunit">
    <text evidence="1">Homodimer.</text>
</comment>
<comment type="similarity">
    <text evidence="1">Belongs to the LuxS family.</text>
</comment>
<protein>
    <recommendedName>
        <fullName evidence="1">S-ribosylhomocysteine lyase</fullName>
        <ecNumber evidence="1">4.4.1.21</ecNumber>
    </recommendedName>
    <alternativeName>
        <fullName evidence="1">AI-2 synthesis protein</fullName>
    </alternativeName>
    <alternativeName>
        <fullName evidence="1">Autoinducer-2 production protein LuxS</fullName>
    </alternativeName>
</protein>
<gene>
    <name evidence="1" type="primary">luxS</name>
    <name type="ordered locus">Blon_2000</name>
    <name type="ordered locus">BLIJ_2075</name>
</gene>
<sequence length="164" mass="18420">MTEGKAEKPVVESFQLDHTKVKAPYVRYIDTETGPHGDVISNYDLRLTQPNKQAIPTGGLHTIEHTIAVLLRERIPGYIDCSPFGCRTGFHLLTWGTHSTEDVAKALKESLEFIAYKATWDDVPATTEKSCGNYRDHSLFAAKEWAKQILEEGISSDPFERKVV</sequence>
<keyword id="KW-0071">Autoinducer synthesis</keyword>
<keyword id="KW-0408">Iron</keyword>
<keyword id="KW-0456">Lyase</keyword>
<keyword id="KW-0479">Metal-binding</keyword>
<keyword id="KW-0673">Quorum sensing</keyword>
<proteinExistence type="inferred from homology"/>
<feature type="chain" id="PRO_1000118535" description="S-ribosylhomocysteine lyase">
    <location>
        <begin position="1"/>
        <end position="164"/>
    </location>
</feature>
<feature type="binding site" evidence="1">
    <location>
        <position position="61"/>
    </location>
    <ligand>
        <name>Fe cation</name>
        <dbReference type="ChEBI" id="CHEBI:24875"/>
    </ligand>
</feature>
<feature type="binding site" evidence="1">
    <location>
        <position position="65"/>
    </location>
    <ligand>
        <name>Fe cation</name>
        <dbReference type="ChEBI" id="CHEBI:24875"/>
    </ligand>
</feature>
<feature type="binding site" evidence="1">
    <location>
        <position position="131"/>
    </location>
    <ligand>
        <name>Fe cation</name>
        <dbReference type="ChEBI" id="CHEBI:24875"/>
    </ligand>
</feature>